<sequence length="712" mass="81422">MKIQTIIQIVLISFLFLNVESKKINCLHLQQDECIKNKDKCFLSNVNSCCEKDFLMCLPISSKYCESQTDDVFSNKNILKKSPPSSSHEWCLKKKKSILRFNTSCVPELDLDSEYFKPNLYKCKYSKCQKGFKCVDEKLHKKCETENNPCCKYESKCVPSKDIDQNEAPIFKNPKGQLAQDIYNHLNPDSPQFKDKPNHENHKKDKNNKKHKKDIKNNSDKNNNNNNNNNNKKNKTINNNEPNQNQQSNPIDRTFNNETPFPWNFKNQDQQQQKQEQTQKQTQKEYFKAGSPYPVLPNLNKEPTTHLNTIEPTSFTASASRYQLEGNDNKDEENIDENNGEDKKKKKKKKKDDKSKKPKDDEKHTKKPNVTEQPADDPSIEITEEPTITPSSSPVHQDPCKKATCPNGSHCLVYGNQAYCKLDKPPNYQTMSPLPQKQQPSVKKMDSLSMFYKKSKMLLSEYTTEQRPQLTCSTIKCEDDEVCINKVGLNPYCQIKPPPKPVSYNKTSCSQCPIGSYRCNPNPNGSGVICETDAINCRLIACKEGEFCIDNIENTPPKCYPKLLCNLSKIPPDYYCISDEIRGGFYVKYESYIDLSCETLLCEGVNSYCVENGGPICKTWPNDTIQYQPSCDKCPKDTMSCTPNENSNNKGVVCRIDRPSCSVIQCPDNQYCVNTDKGPKCYKRSIECSNSRCPRDYTCKRDEIRGGACLKN</sequence>
<name>Y9517_DICDI</name>
<organism>
    <name type="scientific">Dictyostelium discoideum</name>
    <name type="common">Social amoeba</name>
    <dbReference type="NCBI Taxonomy" id="44689"/>
    <lineage>
        <taxon>Eukaryota</taxon>
        <taxon>Amoebozoa</taxon>
        <taxon>Evosea</taxon>
        <taxon>Eumycetozoa</taxon>
        <taxon>Dictyostelia</taxon>
        <taxon>Dictyosteliales</taxon>
        <taxon>Dictyosteliaceae</taxon>
        <taxon>Dictyostelium</taxon>
    </lineage>
</organism>
<comment type="subcellular location">
    <subcellularLocation>
        <location evidence="5">Secreted</location>
    </subcellularLocation>
</comment>
<comment type="developmental stage">
    <text evidence="3 4">Expressed in prestalk cells only during culmination and not at the slug stage. Expressed at high levels in pstO cells. Expressed precociously in mekA and erkA-null cells during early development. Precocious expression completely depends on the presence of smkA.</text>
</comment>
<proteinExistence type="evidence at transcript level"/>
<protein>
    <recommendedName>
        <fullName>Follistatin-like domain-containing protein DDB_G0289517</fullName>
    </recommendedName>
</protein>
<dbReference type="EMBL" id="AAFI02000141">
    <property type="protein sequence ID" value="EAL62690.1"/>
    <property type="molecule type" value="Genomic_DNA"/>
</dbReference>
<dbReference type="RefSeq" id="XP_636199.1">
    <property type="nucleotide sequence ID" value="XM_631107.1"/>
</dbReference>
<dbReference type="FunCoup" id="Q54HD9">
    <property type="interactions" value="243"/>
</dbReference>
<dbReference type="STRING" id="44689.Q54HD9"/>
<dbReference type="GlyGen" id="Q54HD9">
    <property type="glycosylation" value="9 sites"/>
</dbReference>
<dbReference type="PaxDb" id="44689-DDB0231081"/>
<dbReference type="EnsemblProtists" id="EAL62690">
    <property type="protein sequence ID" value="EAL62690"/>
    <property type="gene ID" value="DDB_G0289517"/>
</dbReference>
<dbReference type="GeneID" id="8627186"/>
<dbReference type="KEGG" id="ddi:DDB_G0289517"/>
<dbReference type="dictyBase" id="DDB_G0289517"/>
<dbReference type="VEuPathDB" id="AmoebaDB:DDB_G0289517"/>
<dbReference type="eggNOG" id="ENOG502RCBQ">
    <property type="taxonomic scope" value="Eukaryota"/>
</dbReference>
<dbReference type="HOGENOM" id="CLU_388036_0_0_1"/>
<dbReference type="InParanoid" id="Q54HD9"/>
<dbReference type="OMA" id="SHEWCLK"/>
<dbReference type="PRO" id="PR:Q54HD9"/>
<dbReference type="Proteomes" id="UP000002195">
    <property type="component" value="Chromosome 5"/>
</dbReference>
<dbReference type="GO" id="GO:0005576">
    <property type="term" value="C:extracellular region"/>
    <property type="evidence" value="ECO:0007669"/>
    <property type="project" value="UniProtKB-SubCell"/>
</dbReference>
<dbReference type="GO" id="GO:0031160">
    <property type="term" value="C:spore wall"/>
    <property type="evidence" value="ECO:0007669"/>
    <property type="project" value="UniProtKB-ARBA"/>
</dbReference>
<dbReference type="GO" id="GO:0030435">
    <property type="term" value="P:sporulation resulting in formation of a cellular spore"/>
    <property type="evidence" value="ECO:0007669"/>
    <property type="project" value="UniProtKB-ARBA"/>
</dbReference>
<dbReference type="InterPro" id="IPR007643">
    <property type="entry name" value="Dict_spore_N"/>
</dbReference>
<dbReference type="InterPro" id="IPR003645">
    <property type="entry name" value="Fol_N"/>
</dbReference>
<dbReference type="Pfam" id="PF04562">
    <property type="entry name" value="Dicty_spore_N"/>
    <property type="match status" value="1"/>
</dbReference>
<dbReference type="SMART" id="SM00274">
    <property type="entry name" value="FOLN"/>
    <property type="match status" value="5"/>
</dbReference>
<accession>Q54HD9</accession>
<gene>
    <name type="ORF">DDB_G0289517</name>
</gene>
<feature type="signal peptide" evidence="1">
    <location>
        <begin position="1"/>
        <end position="21"/>
    </location>
</feature>
<feature type="chain" id="PRO_0000392664" description="Follistatin-like domain-containing protein DDB_G0289517">
    <location>
        <begin position="22"/>
        <end position="712"/>
    </location>
</feature>
<feature type="domain" description="Follistatin-like 1">
    <location>
        <begin position="399"/>
        <end position="421"/>
    </location>
</feature>
<feature type="domain" description="Follistatin-like 2">
    <location>
        <begin position="471"/>
        <end position="494"/>
    </location>
</feature>
<feature type="domain" description="Follistatin-like 3">
    <location>
        <begin position="596"/>
        <end position="618"/>
    </location>
</feature>
<feature type="domain" description="Follistatin-like 4">
    <location>
        <begin position="660"/>
        <end position="682"/>
    </location>
</feature>
<feature type="domain" description="Follistatin-like 5">
    <location>
        <begin position="687"/>
        <end position="710"/>
    </location>
</feature>
<feature type="region of interest" description="Disordered" evidence="2">
    <location>
        <begin position="181"/>
        <end position="400"/>
    </location>
</feature>
<feature type="compositionally biased region" description="Basic and acidic residues" evidence="2">
    <location>
        <begin position="192"/>
        <end position="203"/>
    </location>
</feature>
<feature type="compositionally biased region" description="Basic residues" evidence="2">
    <location>
        <begin position="204"/>
        <end position="214"/>
    </location>
</feature>
<feature type="compositionally biased region" description="Low complexity" evidence="2">
    <location>
        <begin position="220"/>
        <end position="251"/>
    </location>
</feature>
<feature type="compositionally biased region" description="Polar residues" evidence="2">
    <location>
        <begin position="254"/>
        <end position="269"/>
    </location>
</feature>
<feature type="compositionally biased region" description="Low complexity" evidence="2">
    <location>
        <begin position="270"/>
        <end position="281"/>
    </location>
</feature>
<feature type="compositionally biased region" description="Polar residues" evidence="2">
    <location>
        <begin position="301"/>
        <end position="321"/>
    </location>
</feature>
<feature type="compositionally biased region" description="Acidic residues" evidence="2">
    <location>
        <begin position="330"/>
        <end position="339"/>
    </location>
</feature>
<feature type="compositionally biased region" description="Basic and acidic residues" evidence="2">
    <location>
        <begin position="352"/>
        <end position="364"/>
    </location>
</feature>
<feature type="compositionally biased region" description="Acidic residues" evidence="2">
    <location>
        <begin position="374"/>
        <end position="384"/>
    </location>
</feature>
<feature type="compositionally biased region" description="Polar residues" evidence="2">
    <location>
        <begin position="386"/>
        <end position="395"/>
    </location>
</feature>
<feature type="glycosylation site" description="N-linked (GlcNAc...) asparagine" evidence="1">
    <location>
        <position position="102"/>
    </location>
</feature>
<feature type="glycosylation site" description="N-linked (GlcNAc...) asparagine" evidence="1">
    <location>
        <position position="217"/>
    </location>
</feature>
<feature type="glycosylation site" description="N-linked (GlcNAc...) asparagine" evidence="1">
    <location>
        <position position="234"/>
    </location>
</feature>
<feature type="glycosylation site" description="N-linked (GlcNAc...) asparagine" evidence="1">
    <location>
        <position position="369"/>
    </location>
</feature>
<feature type="glycosylation site" description="N-linked (GlcNAc...) asparagine" evidence="1">
    <location>
        <position position="407"/>
    </location>
</feature>
<feature type="glycosylation site" description="N-linked (GlcNAc...) asparagine" evidence="1">
    <location>
        <position position="505"/>
    </location>
</feature>
<feature type="glycosylation site" description="N-linked (GlcNAc...) asparagine" evidence="1">
    <location>
        <position position="524"/>
    </location>
</feature>
<feature type="glycosylation site" description="N-linked (GlcNAc...) asparagine" evidence="1">
    <location>
        <position position="566"/>
    </location>
</feature>
<feature type="glycosylation site" description="N-linked (GlcNAc...) asparagine" evidence="1">
    <location>
        <position position="622"/>
    </location>
</feature>
<keyword id="KW-0325">Glycoprotein</keyword>
<keyword id="KW-1185">Reference proteome</keyword>
<keyword id="KW-0677">Repeat</keyword>
<keyword id="KW-0964">Secreted</keyword>
<keyword id="KW-0732">Signal</keyword>
<evidence type="ECO:0000255" key="1"/>
<evidence type="ECO:0000256" key="2">
    <source>
        <dbReference type="SAM" id="MobiDB-lite"/>
    </source>
</evidence>
<evidence type="ECO:0000269" key="3">
    <source>
    </source>
</evidence>
<evidence type="ECO:0000269" key="4">
    <source>
    </source>
</evidence>
<evidence type="ECO:0000305" key="5"/>
<reference key="1">
    <citation type="journal article" date="2005" name="Nature">
        <title>The genome of the social amoeba Dictyostelium discoideum.</title>
        <authorList>
            <person name="Eichinger L."/>
            <person name="Pachebat J.A."/>
            <person name="Gloeckner G."/>
            <person name="Rajandream M.A."/>
            <person name="Sucgang R."/>
            <person name="Berriman M."/>
            <person name="Song J."/>
            <person name="Olsen R."/>
            <person name="Szafranski K."/>
            <person name="Xu Q."/>
            <person name="Tunggal B."/>
            <person name="Kummerfeld S."/>
            <person name="Madera M."/>
            <person name="Konfortov B.A."/>
            <person name="Rivero F."/>
            <person name="Bankier A.T."/>
            <person name="Lehmann R."/>
            <person name="Hamlin N."/>
            <person name="Davies R."/>
            <person name="Gaudet P."/>
            <person name="Fey P."/>
            <person name="Pilcher K."/>
            <person name="Chen G."/>
            <person name="Saunders D."/>
            <person name="Sodergren E.J."/>
            <person name="Davis P."/>
            <person name="Kerhornou A."/>
            <person name="Nie X."/>
            <person name="Hall N."/>
            <person name="Anjard C."/>
            <person name="Hemphill L."/>
            <person name="Bason N."/>
            <person name="Farbrother P."/>
            <person name="Desany B."/>
            <person name="Just E."/>
            <person name="Morio T."/>
            <person name="Rost R."/>
            <person name="Churcher C.M."/>
            <person name="Cooper J."/>
            <person name="Haydock S."/>
            <person name="van Driessche N."/>
            <person name="Cronin A."/>
            <person name="Goodhead I."/>
            <person name="Muzny D.M."/>
            <person name="Mourier T."/>
            <person name="Pain A."/>
            <person name="Lu M."/>
            <person name="Harper D."/>
            <person name="Lindsay R."/>
            <person name="Hauser H."/>
            <person name="James K.D."/>
            <person name="Quiles M."/>
            <person name="Madan Babu M."/>
            <person name="Saito T."/>
            <person name="Buchrieser C."/>
            <person name="Wardroper A."/>
            <person name="Felder M."/>
            <person name="Thangavelu M."/>
            <person name="Johnson D."/>
            <person name="Knights A."/>
            <person name="Loulseged H."/>
            <person name="Mungall K.L."/>
            <person name="Oliver K."/>
            <person name="Price C."/>
            <person name="Quail M.A."/>
            <person name="Urushihara H."/>
            <person name="Hernandez J."/>
            <person name="Rabbinowitsch E."/>
            <person name="Steffen D."/>
            <person name="Sanders M."/>
            <person name="Ma J."/>
            <person name="Kohara Y."/>
            <person name="Sharp S."/>
            <person name="Simmonds M.N."/>
            <person name="Spiegler S."/>
            <person name="Tivey A."/>
            <person name="Sugano S."/>
            <person name="White B."/>
            <person name="Walker D."/>
            <person name="Woodward J.R."/>
            <person name="Winckler T."/>
            <person name="Tanaka Y."/>
            <person name="Shaulsky G."/>
            <person name="Schleicher M."/>
            <person name="Weinstock G.M."/>
            <person name="Rosenthal A."/>
            <person name="Cox E.C."/>
            <person name="Chisholm R.L."/>
            <person name="Gibbs R.A."/>
            <person name="Loomis W.F."/>
            <person name="Platzer M."/>
            <person name="Kay R.R."/>
            <person name="Williams J.G."/>
            <person name="Dear P.H."/>
            <person name="Noegel A.A."/>
            <person name="Barrell B.G."/>
            <person name="Kuspa A."/>
        </authorList>
    </citation>
    <scope>NUCLEOTIDE SEQUENCE [LARGE SCALE GENOMIC DNA]</scope>
    <source>
        <strain>AX4</strain>
    </source>
</reference>
<reference key="2">
    <citation type="journal article" date="2003" name="Eukaryot. Cell">
        <title>Changing patterns of gene expression in Dictyostelium prestalk cell subtypes recognized by in situ hybridization with genes from microarray analyses.</title>
        <authorList>
            <person name="Maeda M."/>
            <person name="Sakamoto H."/>
            <person name="Iranfar N."/>
            <person name="Fuller D."/>
            <person name="Maruo T."/>
            <person name="Ogihara S."/>
            <person name="Morio T."/>
            <person name="Urushihara H."/>
            <person name="Tanaka Y."/>
            <person name="Loomis W.F."/>
        </authorList>
    </citation>
    <scope>DEVELOPMENTAL STAGE [LARGE SCALE ANALYSIS]</scope>
</reference>
<reference key="3">
    <citation type="journal article" date="2005" name="Mol. Cell. Biol.">
        <title>Loss of SMEK, a novel, conserved protein, suppresses MEK1 null cell polarity, chemotaxis, and gene expression defects.</title>
        <authorList>
            <person name="Mendoza M.C."/>
            <person name="Du F."/>
            <person name="Iranfar N."/>
            <person name="Tang N."/>
            <person name="Ma H."/>
            <person name="Loomis W.F."/>
            <person name="Firtel R.A."/>
        </authorList>
    </citation>
    <scope>DEVELOPMENTAL STAGE [LARGE SCALE ANALYSIS]</scope>
</reference>